<protein>
    <recommendedName>
        <fullName evidence="1">UPF0283 membrane protein KPK_3110</fullName>
    </recommendedName>
</protein>
<keyword id="KW-0997">Cell inner membrane</keyword>
<keyword id="KW-1003">Cell membrane</keyword>
<keyword id="KW-0472">Membrane</keyword>
<keyword id="KW-0812">Transmembrane</keyword>
<keyword id="KW-1133">Transmembrane helix</keyword>
<dbReference type="EMBL" id="CP000964">
    <property type="protein sequence ID" value="ACI08637.1"/>
    <property type="molecule type" value="Genomic_DNA"/>
</dbReference>
<dbReference type="SMR" id="B5XRW2"/>
<dbReference type="KEGG" id="kpe:KPK_3110"/>
<dbReference type="HOGENOM" id="CLU_057693_2_0_6"/>
<dbReference type="BioCyc" id="KPNE507522:GI0B-3097-MONOMER"/>
<dbReference type="Proteomes" id="UP000001734">
    <property type="component" value="Chromosome"/>
</dbReference>
<dbReference type="GO" id="GO:0005886">
    <property type="term" value="C:plasma membrane"/>
    <property type="evidence" value="ECO:0007669"/>
    <property type="project" value="UniProtKB-SubCell"/>
</dbReference>
<dbReference type="HAMAP" id="MF_01085">
    <property type="entry name" value="UPF0283"/>
    <property type="match status" value="1"/>
</dbReference>
<dbReference type="InterPro" id="IPR021147">
    <property type="entry name" value="DUF697"/>
</dbReference>
<dbReference type="InterPro" id="IPR006507">
    <property type="entry name" value="UPF0283"/>
</dbReference>
<dbReference type="NCBIfam" id="TIGR01620">
    <property type="entry name" value="hyp_HI0043"/>
    <property type="match status" value="1"/>
</dbReference>
<dbReference type="PANTHER" id="PTHR39342">
    <property type="entry name" value="UPF0283 MEMBRANE PROTEIN YCJF"/>
    <property type="match status" value="1"/>
</dbReference>
<dbReference type="PANTHER" id="PTHR39342:SF1">
    <property type="entry name" value="UPF0283 MEMBRANE PROTEIN YCJF"/>
    <property type="match status" value="1"/>
</dbReference>
<dbReference type="Pfam" id="PF05128">
    <property type="entry name" value="DUF697"/>
    <property type="match status" value="1"/>
</dbReference>
<feature type="chain" id="PRO_1000136891" description="UPF0283 membrane protein KPK_3110">
    <location>
        <begin position="1"/>
        <end position="353"/>
    </location>
</feature>
<feature type="transmembrane region" description="Helical" evidence="1">
    <location>
        <begin position="70"/>
        <end position="90"/>
    </location>
</feature>
<feature type="transmembrane region" description="Helical" evidence="1">
    <location>
        <begin position="99"/>
        <end position="119"/>
    </location>
</feature>
<feature type="transmembrane region" description="Helical" evidence="1">
    <location>
        <begin position="213"/>
        <end position="233"/>
    </location>
</feature>
<reference key="1">
    <citation type="journal article" date="2008" name="PLoS Genet.">
        <title>Complete genome sequence of the N2-fixing broad host range endophyte Klebsiella pneumoniae 342 and virulence predictions verified in mice.</title>
        <authorList>
            <person name="Fouts D.E."/>
            <person name="Tyler H.L."/>
            <person name="DeBoy R.T."/>
            <person name="Daugherty S."/>
            <person name="Ren Q."/>
            <person name="Badger J.H."/>
            <person name="Durkin A.S."/>
            <person name="Huot H."/>
            <person name="Shrivastava S."/>
            <person name="Kothari S."/>
            <person name="Dodson R.J."/>
            <person name="Mohamoud Y."/>
            <person name="Khouri H."/>
            <person name="Roesch L.F.W."/>
            <person name="Krogfelt K.A."/>
            <person name="Struve C."/>
            <person name="Triplett E.W."/>
            <person name="Methe B.A."/>
        </authorList>
    </citation>
    <scope>NUCLEOTIDE SEQUENCE [LARGE SCALE GENOMIC DNA]</scope>
    <source>
        <strain>342</strain>
    </source>
</reference>
<sequence length="353" mass="39067">MSEPLKPRIDFDGPLQAEKIPPLKSARAFDTLEADNFAPARLVTGEEEEGAAEAVVESVLRPKRSLWRRMVSAGLAIFGVSVVAQGVQWTANAWQTQDWIALGGCVAGALIVGAGVGSVATEWRRLWRLRQRAHERDEARDMLHSHAVGKAKAFCEKLAQQAGLDQSHPALQRWYAAIHETQSDREVVSLYAQLVQPVLDAQARREISRSAAESTLMIAVSPLALVDMAFIAWRNLRLINRIATLYGIELGYYSRLRLFRLVLLNIAFAGASELVREVGMDWMSQDLAARLSARAAQGIGAGLLTARLGIKAMELCRPLPWIADDKPRLGDFRRELIGQLKETLQKSKTSPEK</sequence>
<accession>B5XRW2</accession>
<organism>
    <name type="scientific">Klebsiella pneumoniae (strain 342)</name>
    <dbReference type="NCBI Taxonomy" id="507522"/>
    <lineage>
        <taxon>Bacteria</taxon>
        <taxon>Pseudomonadati</taxon>
        <taxon>Pseudomonadota</taxon>
        <taxon>Gammaproteobacteria</taxon>
        <taxon>Enterobacterales</taxon>
        <taxon>Enterobacteriaceae</taxon>
        <taxon>Klebsiella/Raoultella group</taxon>
        <taxon>Klebsiella</taxon>
        <taxon>Klebsiella pneumoniae complex</taxon>
    </lineage>
</organism>
<gene>
    <name type="ordered locus">KPK_3110</name>
</gene>
<name>Y3110_KLEP3</name>
<evidence type="ECO:0000255" key="1">
    <source>
        <dbReference type="HAMAP-Rule" id="MF_01085"/>
    </source>
</evidence>
<proteinExistence type="inferred from homology"/>
<comment type="subcellular location">
    <subcellularLocation>
        <location evidence="1">Cell inner membrane</location>
        <topology evidence="1">Multi-pass membrane protein</topology>
    </subcellularLocation>
</comment>
<comment type="similarity">
    <text evidence="1">Belongs to the UPF0283 family.</text>
</comment>